<dbReference type="EMBL" id="M33533">
    <property type="protein sequence ID" value="AAA72828.1"/>
    <property type="molecule type" value="Genomic_DNA"/>
</dbReference>
<dbReference type="RefSeq" id="YP_010066931.1">
    <property type="nucleotide sequence ID" value="NC_054906.1"/>
</dbReference>
<dbReference type="GeneID" id="65055529"/>
<proteinExistence type="predicted"/>
<organism>
    <name type="scientific">Enterobacteria phage RB18</name>
    <name type="common">Bacteriophage RB18</name>
    <dbReference type="NCBI Taxonomy" id="10692"/>
    <lineage>
        <taxon>Viruses</taxon>
        <taxon>Duplodnaviria</taxon>
        <taxon>Heunggongvirae</taxon>
        <taxon>Uroviricota</taxon>
        <taxon>Caudoviricetes</taxon>
        <taxon>Straboviridae</taxon>
        <taxon>Tevenvirinae</taxon>
        <taxon>Tequatrovirus</taxon>
        <taxon>Tequatrovirus RB18</taxon>
    </lineage>
</organism>
<reference key="1">
    <citation type="journal article" date="1990" name="J. Bacteriol.">
        <title>Sequence analysis of conserved regA and variable orf43.1 genes in T4-like bacteriophages.</title>
        <authorList>
            <person name="Miller E.S."/>
            <person name="Jozwik C.E."/>
        </authorList>
    </citation>
    <scope>NUCLEOTIDE SEQUENCE [GENOMIC DNA]</scope>
</reference>
<protein>
    <recommendedName>
        <fullName>Uncharacterized protein ORF43.1 in regA 3'region</fullName>
    </recommendedName>
</protein>
<accession>P18243</accession>
<organismHost>
    <name type="scientific">Escherichia coli</name>
    <dbReference type="NCBI Taxonomy" id="562"/>
</organismHost>
<sequence length="73" mass="8479">MTAITPQEYMASLKEKYNLSATETLFDLPENLQLKFQVEFQKLIHPEQKHFTAVVKSINADGMTIFHRQIVLI</sequence>
<name>Y43_BPR18</name>
<feature type="chain" id="PRO_0000165222" description="Uncharacterized protein ORF43.1 in regA 3'region">
    <location>
        <begin position="1"/>
        <end position="73"/>
    </location>
</feature>